<name>LYAM1_PAPHA</name>
<protein>
    <recommendedName>
        <fullName>L-selectin</fullName>
    </recommendedName>
    <alternativeName>
        <fullName>CD62 antigen-like family member L</fullName>
    </alternativeName>
    <alternativeName>
        <fullName>Leukocyte adhesion molecule 1</fullName>
        <shortName>LAM-1</shortName>
    </alternativeName>
    <alternativeName>
        <fullName>Leukocyte-endothelial cell adhesion molecule 1</fullName>
        <shortName>LECAM1</shortName>
    </alternativeName>
    <alternativeName>
        <fullName>Lymph node homing receptor</fullName>
    </alternativeName>
    <cdAntigenName>CD62L</cdAntigenName>
</protein>
<feature type="signal peptide" evidence="1">
    <location>
        <begin position="1"/>
        <end position="28"/>
    </location>
</feature>
<feature type="propeptide" id="PRO_0000017483" evidence="1">
    <location>
        <begin position="29"/>
        <end position="38"/>
    </location>
</feature>
<feature type="chain" id="PRO_0000017484" description="L-selectin">
    <location>
        <begin position="39"/>
        <end position="372"/>
    </location>
</feature>
<feature type="topological domain" description="Extracellular" evidence="3">
    <location>
        <begin position="39"/>
        <end position="332"/>
    </location>
</feature>
<feature type="transmembrane region" description="Helical" evidence="3">
    <location>
        <begin position="333"/>
        <end position="355"/>
    </location>
</feature>
<feature type="topological domain" description="Cytoplasmic" evidence="3">
    <location>
        <begin position="356"/>
        <end position="372"/>
    </location>
</feature>
<feature type="domain" description="C-type lectin" evidence="4">
    <location>
        <begin position="55"/>
        <end position="155"/>
    </location>
</feature>
<feature type="domain" description="EGF-like" evidence="5">
    <location>
        <begin position="156"/>
        <end position="192"/>
    </location>
</feature>
<feature type="domain" description="Sushi 1" evidence="6">
    <location>
        <begin position="195"/>
        <end position="256"/>
    </location>
</feature>
<feature type="domain" description="Sushi 2" evidence="6">
    <location>
        <begin position="257"/>
        <end position="318"/>
    </location>
</feature>
<feature type="binding site" evidence="2">
    <location>
        <position position="118"/>
    </location>
    <ligand>
        <name>Ca(2+)</name>
        <dbReference type="ChEBI" id="CHEBI:29108"/>
    </ligand>
</feature>
<feature type="binding site" evidence="2">
    <location>
        <position position="120"/>
    </location>
    <ligand>
        <name>Ca(2+)</name>
        <dbReference type="ChEBI" id="CHEBI:29108"/>
    </ligand>
</feature>
<feature type="binding site" evidence="2">
    <location>
        <position position="126"/>
    </location>
    <ligand>
        <name>Ca(2+)</name>
        <dbReference type="ChEBI" id="CHEBI:29108"/>
    </ligand>
</feature>
<feature type="binding site" evidence="2">
    <location>
        <position position="143"/>
    </location>
    <ligand>
        <name>Ca(2+)</name>
        <dbReference type="ChEBI" id="CHEBI:29108"/>
    </ligand>
</feature>
<feature type="binding site" evidence="2">
    <location>
        <position position="144"/>
    </location>
    <ligand>
        <name>Ca(2+)</name>
        <dbReference type="ChEBI" id="CHEBI:29108"/>
    </ligand>
</feature>
<feature type="glycosylation site" description="N-linked (GlcNAc...) asparagine" evidence="3">
    <location>
        <position position="60"/>
    </location>
</feature>
<feature type="glycosylation site" description="N-linked (GlcNAc...) asparagine" evidence="3">
    <location>
        <position position="104"/>
    </location>
</feature>
<feature type="glycosylation site" description="N-linked (GlcNAc...) asparagine" evidence="3">
    <location>
        <position position="177"/>
    </location>
</feature>
<feature type="glycosylation site" description="N-linked (GlcNAc...) asparagine" evidence="3">
    <location>
        <position position="226"/>
    </location>
</feature>
<feature type="glycosylation site" description="N-linked (GlcNAc...) asparagine" evidence="3">
    <location>
        <position position="232"/>
    </location>
</feature>
<feature type="glycosylation site" description="N-linked (GlcNAc...) asparagine" evidence="3">
    <location>
        <position position="246"/>
    </location>
</feature>
<feature type="glycosylation site" description="N-linked (GlcNAc...) asparagine" evidence="3">
    <location>
        <position position="271"/>
    </location>
</feature>
<feature type="disulfide bond" evidence="2">
    <location>
        <begin position="57"/>
        <end position="155"/>
    </location>
</feature>
<feature type="disulfide bond" evidence="2">
    <location>
        <begin position="128"/>
        <end position="160"/>
    </location>
</feature>
<feature type="disulfide bond" evidence="2">
    <location>
        <begin position="128"/>
        <end position="147"/>
    </location>
</feature>
<feature type="disulfide bond" evidence="2">
    <location>
        <begin position="160"/>
        <end position="171"/>
    </location>
</feature>
<feature type="disulfide bond" evidence="1">
    <location>
        <begin position="165"/>
        <end position="180"/>
    </location>
</feature>
<feature type="disulfide bond" evidence="2">
    <location>
        <begin position="182"/>
        <end position="191"/>
    </location>
</feature>
<feature type="disulfide bond" evidence="1">
    <location>
        <begin position="197"/>
        <end position="241"/>
    </location>
</feature>
<feature type="disulfide bond" evidence="1">
    <location>
        <begin position="227"/>
        <end position="254"/>
    </location>
</feature>
<feature type="disulfide bond" evidence="1">
    <location>
        <begin position="259"/>
        <end position="303"/>
    </location>
</feature>
<feature type="disulfide bond" evidence="1">
    <location>
        <begin position="289"/>
        <end position="316"/>
    </location>
</feature>
<organism>
    <name type="scientific">Papio hamadryas</name>
    <name type="common">Hamadryas baboon</name>
    <dbReference type="NCBI Taxonomy" id="9557"/>
    <lineage>
        <taxon>Eukaryota</taxon>
        <taxon>Metazoa</taxon>
        <taxon>Chordata</taxon>
        <taxon>Craniata</taxon>
        <taxon>Vertebrata</taxon>
        <taxon>Euteleostomi</taxon>
        <taxon>Mammalia</taxon>
        <taxon>Eutheria</taxon>
        <taxon>Euarchontoglires</taxon>
        <taxon>Primates</taxon>
        <taxon>Haplorrhini</taxon>
        <taxon>Catarrhini</taxon>
        <taxon>Cercopithecidae</taxon>
        <taxon>Cercopithecinae</taxon>
        <taxon>Papio</taxon>
    </lineage>
</organism>
<gene>
    <name type="primary">SELL</name>
</gene>
<evidence type="ECO:0000250" key="1"/>
<evidence type="ECO:0000250" key="2">
    <source>
        <dbReference type="UniProtKB" id="P14151"/>
    </source>
</evidence>
<evidence type="ECO:0000255" key="3"/>
<evidence type="ECO:0000255" key="4">
    <source>
        <dbReference type="PROSITE-ProRule" id="PRU00040"/>
    </source>
</evidence>
<evidence type="ECO:0000255" key="5">
    <source>
        <dbReference type="PROSITE-ProRule" id="PRU00076"/>
    </source>
</evidence>
<evidence type="ECO:0000255" key="6">
    <source>
        <dbReference type="PROSITE-ProRule" id="PRU00302"/>
    </source>
</evidence>
<evidence type="ECO:0000305" key="7"/>
<reference key="1">
    <citation type="journal article" date="1996" name="Gene">
        <title>PCR cloning of the cDNA encoding baboon L-selectin.</title>
        <authorList>
            <person name="Tsurushita N."/>
            <person name="Fu H."/>
            <person name="Berg E.L."/>
        </authorList>
    </citation>
    <scope>NUCLEOTIDE SEQUENCE [MRNA]</scope>
</reference>
<accession>Q28768</accession>
<proteinExistence type="evidence at transcript level"/>
<dbReference type="EMBL" id="U52074">
    <property type="protein sequence ID" value="AAB40903.1"/>
    <property type="molecule type" value="mRNA"/>
</dbReference>
<dbReference type="PIR" id="JC5377">
    <property type="entry name" value="JC5377"/>
</dbReference>
<dbReference type="BMRB" id="Q28768"/>
<dbReference type="SMR" id="Q28768"/>
<dbReference type="GlyCosmos" id="Q28768">
    <property type="glycosylation" value="7 sites, No reported glycans"/>
</dbReference>
<dbReference type="KEGG" id="panu:100126706"/>
<dbReference type="GO" id="GO:0005886">
    <property type="term" value="C:plasma membrane"/>
    <property type="evidence" value="ECO:0000250"/>
    <property type="project" value="UniProtKB"/>
</dbReference>
<dbReference type="GO" id="GO:0005509">
    <property type="term" value="F:calcium ion binding"/>
    <property type="evidence" value="ECO:0000250"/>
    <property type="project" value="UniProtKB"/>
</dbReference>
<dbReference type="GO" id="GO:0070492">
    <property type="term" value="F:oligosaccharide binding"/>
    <property type="evidence" value="ECO:0000250"/>
    <property type="project" value="UniProtKB"/>
</dbReference>
<dbReference type="GO" id="GO:0016339">
    <property type="term" value="P:calcium-dependent cell-cell adhesion via plasma membrane cell adhesion molecules"/>
    <property type="evidence" value="ECO:0000250"/>
    <property type="project" value="UniProtKB"/>
</dbReference>
<dbReference type="GO" id="GO:0050901">
    <property type="term" value="P:leukocyte tethering or rolling"/>
    <property type="evidence" value="ECO:0000250"/>
    <property type="project" value="UniProtKB"/>
</dbReference>
<dbReference type="CDD" id="cd00033">
    <property type="entry name" value="CCP"/>
    <property type="match status" value="2"/>
</dbReference>
<dbReference type="CDD" id="cd03592">
    <property type="entry name" value="CLECT_selectins_like"/>
    <property type="match status" value="1"/>
</dbReference>
<dbReference type="CDD" id="cd00054">
    <property type="entry name" value="EGF_CA"/>
    <property type="match status" value="1"/>
</dbReference>
<dbReference type="FunFam" id="3.10.100.10:FF:000007">
    <property type="entry name" value="L-selectin"/>
    <property type="match status" value="1"/>
</dbReference>
<dbReference type="FunFam" id="2.10.25.10:FF:000176">
    <property type="entry name" value="Selectin P"/>
    <property type="match status" value="1"/>
</dbReference>
<dbReference type="FunFam" id="2.10.70.10:FF:000001">
    <property type="entry name" value="Selectin P"/>
    <property type="match status" value="2"/>
</dbReference>
<dbReference type="Gene3D" id="2.10.70.10">
    <property type="entry name" value="Complement Module, domain 1"/>
    <property type="match status" value="2"/>
</dbReference>
<dbReference type="Gene3D" id="2.10.25.10">
    <property type="entry name" value="Laminin"/>
    <property type="match status" value="1"/>
</dbReference>
<dbReference type="Gene3D" id="3.10.100.10">
    <property type="entry name" value="Mannose-Binding Protein A, subunit A"/>
    <property type="match status" value="1"/>
</dbReference>
<dbReference type="InterPro" id="IPR001304">
    <property type="entry name" value="C-type_lectin-like"/>
</dbReference>
<dbReference type="InterPro" id="IPR016186">
    <property type="entry name" value="C-type_lectin-like/link_sf"/>
</dbReference>
<dbReference type="InterPro" id="IPR018378">
    <property type="entry name" value="C-type_lectin_CS"/>
</dbReference>
<dbReference type="InterPro" id="IPR050350">
    <property type="entry name" value="Compl-Cell_Adhes-Reg"/>
</dbReference>
<dbReference type="InterPro" id="IPR016187">
    <property type="entry name" value="CTDL_fold"/>
</dbReference>
<dbReference type="InterPro" id="IPR000742">
    <property type="entry name" value="EGF-like_dom"/>
</dbReference>
<dbReference type="InterPro" id="IPR016348">
    <property type="entry name" value="L-selectin"/>
</dbReference>
<dbReference type="InterPro" id="IPR033991">
    <property type="entry name" value="Selectin_CTLD"/>
</dbReference>
<dbReference type="InterPro" id="IPR002396">
    <property type="entry name" value="Selectin_superfamily"/>
</dbReference>
<dbReference type="InterPro" id="IPR035976">
    <property type="entry name" value="Sushi/SCR/CCP_sf"/>
</dbReference>
<dbReference type="InterPro" id="IPR000436">
    <property type="entry name" value="Sushi_SCR_CCP_dom"/>
</dbReference>
<dbReference type="PANTHER" id="PTHR19325">
    <property type="entry name" value="COMPLEMENT COMPONENT-RELATED SUSHI DOMAIN-CONTAINING"/>
    <property type="match status" value="1"/>
</dbReference>
<dbReference type="PANTHER" id="PTHR19325:SF543">
    <property type="entry name" value="L-SELECTIN"/>
    <property type="match status" value="1"/>
</dbReference>
<dbReference type="Pfam" id="PF00008">
    <property type="entry name" value="EGF"/>
    <property type="match status" value="1"/>
</dbReference>
<dbReference type="Pfam" id="PF00059">
    <property type="entry name" value="Lectin_C"/>
    <property type="match status" value="1"/>
</dbReference>
<dbReference type="Pfam" id="PF00084">
    <property type="entry name" value="Sushi"/>
    <property type="match status" value="2"/>
</dbReference>
<dbReference type="PIRSF" id="PIRSF002421">
    <property type="entry name" value="L-selectin"/>
    <property type="match status" value="1"/>
</dbReference>
<dbReference type="PRINTS" id="PR00343">
    <property type="entry name" value="SELECTIN"/>
</dbReference>
<dbReference type="SMART" id="SM00032">
    <property type="entry name" value="CCP"/>
    <property type="match status" value="2"/>
</dbReference>
<dbReference type="SMART" id="SM00034">
    <property type="entry name" value="CLECT"/>
    <property type="match status" value="1"/>
</dbReference>
<dbReference type="SMART" id="SM00181">
    <property type="entry name" value="EGF"/>
    <property type="match status" value="1"/>
</dbReference>
<dbReference type="SUPFAM" id="SSF56436">
    <property type="entry name" value="C-type lectin-like"/>
    <property type="match status" value="1"/>
</dbReference>
<dbReference type="SUPFAM" id="SSF57535">
    <property type="entry name" value="Complement control module/SCR domain"/>
    <property type="match status" value="2"/>
</dbReference>
<dbReference type="SUPFAM" id="SSF57196">
    <property type="entry name" value="EGF/Laminin"/>
    <property type="match status" value="1"/>
</dbReference>
<dbReference type="PROSITE" id="PS00615">
    <property type="entry name" value="C_TYPE_LECTIN_1"/>
    <property type="match status" value="1"/>
</dbReference>
<dbReference type="PROSITE" id="PS50041">
    <property type="entry name" value="C_TYPE_LECTIN_2"/>
    <property type="match status" value="1"/>
</dbReference>
<dbReference type="PROSITE" id="PS00022">
    <property type="entry name" value="EGF_1"/>
    <property type="match status" value="1"/>
</dbReference>
<dbReference type="PROSITE" id="PS01186">
    <property type="entry name" value="EGF_2"/>
    <property type="match status" value="1"/>
</dbReference>
<dbReference type="PROSITE" id="PS50026">
    <property type="entry name" value="EGF_3"/>
    <property type="match status" value="1"/>
</dbReference>
<dbReference type="PROSITE" id="PS50923">
    <property type="entry name" value="SUSHI"/>
    <property type="match status" value="2"/>
</dbReference>
<comment type="function">
    <text evidence="2">Calcium-dependent lectin that mediates cell adhesion by binding to glycoproteins on neighboring cells. Mediates the adherence of lymphocytes to endothelial cells of high endothelial venules in peripheral lymph nodes. Promotes initial tethering and rolling of leukocytes in endothelia.</text>
</comment>
<comment type="subunit">
    <text evidence="2">Interaction with SELPLG/PSGL1 and PODXL2 is required for promoting recruitment and rolling of leukocytes. This interaction is dependent on the sialyl Lewis X glycan modification of SELPLG and PODXL2, and tyrosine sulfation modifications of SELPLG. Sulfation on 'Tyr-51' of SELPLG is important for L-selectin binding.</text>
</comment>
<comment type="subcellular location">
    <subcellularLocation>
        <location evidence="2">Cell membrane</location>
        <topology evidence="2">Single-pass type I membrane protein</topology>
    </subcellularLocation>
</comment>
<comment type="PTM">
    <text evidence="2">N-glycosylated.</text>
</comment>
<comment type="similarity">
    <text evidence="7">Belongs to the selectin/LECAM family.</text>
</comment>
<keyword id="KW-0106">Calcium</keyword>
<keyword id="KW-0130">Cell adhesion</keyword>
<keyword id="KW-1003">Cell membrane</keyword>
<keyword id="KW-1015">Disulfide bond</keyword>
<keyword id="KW-0245">EGF-like domain</keyword>
<keyword id="KW-0325">Glycoprotein</keyword>
<keyword id="KW-0430">Lectin</keyword>
<keyword id="KW-0472">Membrane</keyword>
<keyword id="KW-0479">Metal-binding</keyword>
<keyword id="KW-0677">Repeat</keyword>
<keyword id="KW-0732">Signal</keyword>
<keyword id="KW-0768">Sushi</keyword>
<keyword id="KW-0812">Transmembrane</keyword>
<keyword id="KW-1133">Transmembrane helix</keyword>
<sequence>MIFPRKCQSTQRDLWNIFKLWGWTMLCCDFLAHHGTDCWTYHYSENPMNWQKARRFCRENYTDLVAIQNKAEIEYLEKTLPFSPSYYWIGIRKIGGIWTWVGTNKSLTQEAENWGDGEPNNKKNKEDCVEIYIKRKKDAGKWNDDACHKPKAALCYTASCQPWSCSGHGECVEIINNYTCNCDVGYYGPQCQFVIQCEPLEPPKLGTMDCTHPLGDFSFSSQCAFNCSEGTNLTGIEETTCGPFGNWSSPEPTCQVIQCEPLSAPDLGIMNCSHPLASFSFSSACTFSCSEGTELIGEKKTICESSGIWSNPNPICQKLDRSFSMIKEGDYNPLFIPVAVIVTAFSGLAFIIWLARRLKKGKKSKKSMDDPY</sequence>